<keyword id="KW-0002">3D-structure</keyword>
<keyword id="KW-0903">Direct protein sequencing</keyword>
<keyword id="KW-0274">FAD</keyword>
<keyword id="KW-0285">Flavoprotein</keyword>
<keyword id="KW-0521">NADP</keyword>
<keyword id="KW-0560">Oxidoreductase</keyword>
<gene>
    <name type="primary">ndhF</name>
</gene>
<dbReference type="EC" id="1.17.1.5"/>
<dbReference type="EMBL" id="DQ310789">
    <property type="protein sequence ID" value="ABC88396.1"/>
    <property type="molecule type" value="Genomic_DNA"/>
</dbReference>
<dbReference type="RefSeq" id="WP_090245350.1">
    <property type="nucleotide sequence ID" value="NZ_FNOU01000012.1"/>
</dbReference>
<dbReference type="PDB" id="3HRD">
    <property type="method" value="X-ray"/>
    <property type="resolution" value="2.20 A"/>
    <property type="chains" value="C/G=1-296"/>
</dbReference>
<dbReference type="PDBsum" id="3HRD"/>
<dbReference type="SMR" id="Q0QLF4"/>
<dbReference type="DIP" id="DIP-48911N"/>
<dbReference type="IntAct" id="Q0QLF4">
    <property type="interactions" value="3"/>
</dbReference>
<dbReference type="STRING" id="1528.SAMN04488579_11216"/>
<dbReference type="KEGG" id="ag:ABC88396"/>
<dbReference type="OrthoDB" id="9789842at2"/>
<dbReference type="BioCyc" id="MetaCyc:MONOMER-11707"/>
<dbReference type="UniPathway" id="UPA01010">
    <property type="reaction ID" value="UER01011"/>
</dbReference>
<dbReference type="EvolutionaryTrace" id="Q0QLF4"/>
<dbReference type="GO" id="GO:0071949">
    <property type="term" value="F:FAD binding"/>
    <property type="evidence" value="ECO:0007669"/>
    <property type="project" value="InterPro"/>
</dbReference>
<dbReference type="GO" id="GO:0050138">
    <property type="term" value="F:nicotinate dehydrogenase activity"/>
    <property type="evidence" value="ECO:0000314"/>
    <property type="project" value="UniProtKB"/>
</dbReference>
<dbReference type="GO" id="GO:1901848">
    <property type="term" value="P:nicotinate catabolic process"/>
    <property type="evidence" value="ECO:0000314"/>
    <property type="project" value="UniProtKB"/>
</dbReference>
<dbReference type="FunFam" id="3.30.465.10:FF:000017">
    <property type="entry name" value="Xanthine dehydrogenase, FAD binding subunit"/>
    <property type="match status" value="1"/>
</dbReference>
<dbReference type="Gene3D" id="3.30.465.10">
    <property type="match status" value="1"/>
</dbReference>
<dbReference type="Gene3D" id="3.30.390.50">
    <property type="entry name" value="CO dehydrogenase flavoprotein, C-terminal domain"/>
    <property type="match status" value="1"/>
</dbReference>
<dbReference type="Gene3D" id="3.30.43.10">
    <property type="entry name" value="Uridine Diphospho-n-acetylenolpyruvylglucosamine Reductase, domain 2"/>
    <property type="match status" value="1"/>
</dbReference>
<dbReference type="InterPro" id="IPR005107">
    <property type="entry name" value="CO_DH_flav_C"/>
</dbReference>
<dbReference type="InterPro" id="IPR036683">
    <property type="entry name" value="CO_DH_flav_C_dom_sf"/>
</dbReference>
<dbReference type="InterPro" id="IPR051312">
    <property type="entry name" value="Diverse_Substr_Oxidored"/>
</dbReference>
<dbReference type="InterPro" id="IPR016166">
    <property type="entry name" value="FAD-bd_PCMH"/>
</dbReference>
<dbReference type="InterPro" id="IPR036318">
    <property type="entry name" value="FAD-bd_PCMH-like_sf"/>
</dbReference>
<dbReference type="InterPro" id="IPR016167">
    <property type="entry name" value="FAD-bd_PCMH_sub1"/>
</dbReference>
<dbReference type="InterPro" id="IPR016169">
    <property type="entry name" value="FAD-bd_PCMH_sub2"/>
</dbReference>
<dbReference type="InterPro" id="IPR002346">
    <property type="entry name" value="Mopterin_DH_FAD-bd"/>
</dbReference>
<dbReference type="PANTHER" id="PTHR42659:SF9">
    <property type="entry name" value="XANTHINE DEHYDROGENASE FAD-BINDING SUBUNIT XDHB-RELATED"/>
    <property type="match status" value="1"/>
</dbReference>
<dbReference type="PANTHER" id="PTHR42659">
    <property type="entry name" value="XANTHINE DEHYDROGENASE SUBUNIT C-RELATED"/>
    <property type="match status" value="1"/>
</dbReference>
<dbReference type="Pfam" id="PF03450">
    <property type="entry name" value="CO_deh_flav_C"/>
    <property type="match status" value="1"/>
</dbReference>
<dbReference type="Pfam" id="PF00941">
    <property type="entry name" value="FAD_binding_5"/>
    <property type="match status" value="1"/>
</dbReference>
<dbReference type="SMART" id="SM01092">
    <property type="entry name" value="CO_deh_flav_C"/>
    <property type="match status" value="1"/>
</dbReference>
<dbReference type="SUPFAM" id="SSF55447">
    <property type="entry name" value="CO dehydrogenase flavoprotein C-terminal domain-like"/>
    <property type="match status" value="1"/>
</dbReference>
<dbReference type="SUPFAM" id="SSF56176">
    <property type="entry name" value="FAD-binding/transporter-associated domain-like"/>
    <property type="match status" value="1"/>
</dbReference>
<dbReference type="PROSITE" id="PS51387">
    <property type="entry name" value="FAD_PCMH"/>
    <property type="match status" value="1"/>
</dbReference>
<comment type="function">
    <text evidence="4">Catalyzes the hydroxylation of nicotinate to 6-hydroxynicotinate. Also active against 2-pyrazinecarboxylic acid, but inactive against other nicotinate analogs.</text>
</comment>
<comment type="catalytic activity">
    <reaction evidence="4">
        <text>nicotinate + NADP(+) + H2O = 6-hydroxynicotinate + NADPH + H(+)</text>
        <dbReference type="Rhea" id="RHEA:12236"/>
        <dbReference type="ChEBI" id="CHEBI:15377"/>
        <dbReference type="ChEBI" id="CHEBI:15378"/>
        <dbReference type="ChEBI" id="CHEBI:32544"/>
        <dbReference type="ChEBI" id="CHEBI:57664"/>
        <dbReference type="ChEBI" id="CHEBI:57783"/>
        <dbReference type="ChEBI" id="CHEBI:58349"/>
        <dbReference type="EC" id="1.17.1.5"/>
    </reaction>
</comment>
<comment type="cofactor">
    <cofactor evidence="3 4">
        <name>FAD</name>
        <dbReference type="ChEBI" id="CHEBI:57692"/>
    </cofactor>
    <text evidence="3 4">Binds 1 FAD per subunit.</text>
</comment>
<comment type="activity regulation">
    <text evidence="4">Reversibly inactivated by selenide and sulfide. Not inhibited by cyanide.</text>
</comment>
<comment type="biophysicochemical properties">
    <phDependence>
        <text evidence="4">Most stable at pH 8.0. Unstable at acidic pH values.</text>
    </phDependence>
</comment>
<comment type="pathway">
    <text evidence="2">Cofactor degradation; nicotinate degradation; 6-hydroxynicotinate from nicotinate: step 1/1.</text>
</comment>
<comment type="subunit">
    <text evidence="3 4">Heterooctamer of NDHM, NDHL, NDHS and NDHF. Dimer of heterotetramers.</text>
</comment>
<reference evidence="7 8" key="1">
    <citation type="journal article" date="2006" name="Proc. Natl. Acad. Sci. U.S.A.">
        <title>Molecular and functional analysis of nicotinate catabolism in Eubacterium barkeri.</title>
        <authorList>
            <person name="Alhapel A."/>
            <person name="Darley D.J."/>
            <person name="Wagener N."/>
            <person name="Eckel E."/>
            <person name="Elsner N."/>
            <person name="Pierik A.J."/>
        </authorList>
    </citation>
    <scope>NUCLEOTIDE SEQUENCE [GENOMIC DNA]</scope>
    <scope>PATHWAY</scope>
    <source>
        <strain evidence="8">ATCC 25849 / DSM 1223 / JCM 1389 / NCIMB 10623 / VKM B-1775 / VPI 5359</strain>
    </source>
</reference>
<reference evidence="7" key="2">
    <citation type="journal article" date="1996" name="Biochemistry">
        <title>Properties of the selenium- and molybdenum-containing nicotinic acid hydroxylase from Clostridium barkeri.</title>
        <authorList>
            <person name="Gladyshev V.N."/>
            <person name="Khangulov S.V."/>
            <person name="Stadtman T.C."/>
        </authorList>
    </citation>
    <scope>PROTEIN SEQUENCE OF 1-25</scope>
    <scope>FUNCTION</scope>
    <scope>CATALYTIC ACTIVITY</scope>
    <scope>COFACTOR</scope>
    <scope>BIOPHYSICOCHEMICAL PROPERTIES</scope>
    <scope>ACTIVITY REGULATION</scope>
    <scope>SUBUNIT</scope>
    <source>
        <strain evidence="4">ATCC 25849 / DSM 1223 / JCM 1389 / NCIMB 10623 / VKM B-1775 / VPI 5359</strain>
    </source>
</reference>
<reference evidence="7" key="3">
    <citation type="journal article" date="2009" name="Proc. Natl. Acad. Sci. U.S.A.">
        <title>The Mo-Se active site of nicotinate dehydrogenase.</title>
        <authorList>
            <person name="Wagener N."/>
            <person name="Pierik A.J."/>
            <person name="Ibdah A."/>
            <person name="Hille R."/>
            <person name="Dobbek H."/>
        </authorList>
    </citation>
    <scope>X-RAY CRYSTALLOGRAPHY (2.2 ANGSTROMS) IN COMPLEX WITH FAD; NDHM; NDHS AND NDHL</scope>
    <scope>COFACTOR</scope>
    <scope>SUBUNIT</scope>
    <source>
        <strain evidence="3">ATCC 25849 / DSM 1223 / JCM 1389 / NCIMB 10623 / VKM B-1775 / VPI 5359</strain>
    </source>
</reference>
<protein>
    <recommendedName>
        <fullName evidence="8">Nicotinate dehydrogenase FAD-subunit</fullName>
        <shortName evidence="5">NDH</shortName>
        <ecNumber>1.17.1.5</ecNumber>
    </recommendedName>
    <alternativeName>
        <fullName evidence="6">Nicotinic acid hydroxylase FAD-subunit</fullName>
        <shortName evidence="6">NAH</shortName>
    </alternativeName>
</protein>
<feature type="chain" id="PRO_0000404245" description="Nicotinate dehydrogenase FAD-subunit">
    <location>
        <begin position="1"/>
        <end position="296"/>
    </location>
</feature>
<feature type="domain" description="FAD-binding PCMH-type" evidence="1">
    <location>
        <begin position="1"/>
        <end position="179"/>
    </location>
</feature>
<feature type="binding site" evidence="3">
    <location>
        <begin position="29"/>
        <end position="36"/>
    </location>
    <ligand>
        <name>FAD</name>
        <dbReference type="ChEBI" id="CHEBI:57692"/>
    </ligand>
</feature>
<feature type="binding site" evidence="3">
    <location>
        <position position="101"/>
    </location>
    <ligand>
        <name>FAD</name>
        <dbReference type="ChEBI" id="CHEBI:57692"/>
    </ligand>
</feature>
<feature type="binding site" evidence="3">
    <location>
        <begin position="110"/>
        <end position="114"/>
    </location>
    <ligand>
        <name>FAD</name>
        <dbReference type="ChEBI" id="CHEBI:57692"/>
    </ligand>
</feature>
<feature type="binding site" evidence="3">
    <location>
        <position position="123"/>
    </location>
    <ligand>
        <name>FAD</name>
        <dbReference type="ChEBI" id="CHEBI:57692"/>
    </ligand>
</feature>
<feature type="binding site" evidence="3">
    <location>
        <position position="160"/>
    </location>
    <ligand>
        <name>FAD</name>
        <dbReference type="ChEBI" id="CHEBI:57692"/>
    </ligand>
</feature>
<feature type="binding site" evidence="3">
    <location>
        <position position="169"/>
    </location>
    <ligand>
        <name>FAD</name>
        <dbReference type="ChEBI" id="CHEBI:57692"/>
    </ligand>
</feature>
<feature type="binding site" evidence="3">
    <location>
        <position position="187"/>
    </location>
    <ligand>
        <name>FAD</name>
        <dbReference type="ChEBI" id="CHEBI:57692"/>
    </ligand>
</feature>
<feature type="strand" evidence="9">
    <location>
        <begin position="5"/>
        <end position="7"/>
    </location>
</feature>
<feature type="helix" evidence="9">
    <location>
        <begin position="12"/>
        <end position="21"/>
    </location>
</feature>
<feature type="turn" evidence="9">
    <location>
        <begin position="22"/>
        <end position="24"/>
    </location>
</feature>
<feature type="strand" evidence="9">
    <location>
        <begin position="28"/>
        <end position="32"/>
    </location>
</feature>
<feature type="helix" evidence="9">
    <location>
        <begin position="36"/>
        <end position="41"/>
    </location>
</feature>
<feature type="strand" evidence="9">
    <location>
        <begin position="48"/>
        <end position="52"/>
    </location>
</feature>
<feature type="helix" evidence="9">
    <location>
        <begin position="57"/>
        <end position="59"/>
    </location>
</feature>
<feature type="strand" evidence="9">
    <location>
        <begin position="62"/>
        <end position="64"/>
    </location>
</feature>
<feature type="strand" evidence="9">
    <location>
        <begin position="66"/>
        <end position="72"/>
    </location>
</feature>
<feature type="helix" evidence="9">
    <location>
        <begin position="77"/>
        <end position="82"/>
    </location>
</feature>
<feature type="helix" evidence="9">
    <location>
        <begin position="84"/>
        <end position="89"/>
    </location>
</feature>
<feature type="helix" evidence="9">
    <location>
        <begin position="91"/>
        <end position="98"/>
    </location>
</feature>
<feature type="helix" evidence="9">
    <location>
        <begin position="103"/>
        <end position="108"/>
    </location>
</feature>
<feature type="helix" evidence="9">
    <location>
        <begin position="111"/>
        <end position="117"/>
    </location>
</feature>
<feature type="helix" evidence="9">
    <location>
        <begin position="123"/>
        <end position="130"/>
    </location>
</feature>
<feature type="strand" evidence="9">
    <location>
        <begin position="134"/>
        <end position="139"/>
    </location>
</feature>
<feature type="strand" evidence="9">
    <location>
        <begin position="142"/>
        <end position="147"/>
    </location>
</feature>
<feature type="helix" evidence="9">
    <location>
        <begin position="148"/>
        <end position="153"/>
    </location>
</feature>
<feature type="strand" evidence="9">
    <location>
        <begin position="156"/>
        <end position="162"/>
    </location>
</feature>
<feature type="strand" evidence="9">
    <location>
        <begin position="168"/>
        <end position="175"/>
    </location>
</feature>
<feature type="strand" evidence="9">
    <location>
        <begin position="181"/>
        <end position="188"/>
    </location>
</feature>
<feature type="strand" evidence="9">
    <location>
        <begin position="190"/>
        <end position="194"/>
    </location>
</feature>
<feature type="strand" evidence="9">
    <location>
        <begin position="198"/>
        <end position="208"/>
    </location>
</feature>
<feature type="turn" evidence="9">
    <location>
        <begin position="209"/>
        <end position="211"/>
    </location>
</feature>
<feature type="strand" evidence="9">
    <location>
        <begin position="212"/>
        <end position="221"/>
    </location>
</feature>
<feature type="strand" evidence="9">
    <location>
        <begin position="223"/>
        <end position="226"/>
    </location>
</feature>
<feature type="helix" evidence="9">
    <location>
        <begin position="231"/>
        <end position="237"/>
    </location>
</feature>
<feature type="helix" evidence="9">
    <location>
        <begin position="244"/>
        <end position="248"/>
    </location>
</feature>
<feature type="helix" evidence="9">
    <location>
        <begin position="251"/>
        <end position="261"/>
    </location>
</feature>
<feature type="turn" evidence="9">
    <location>
        <begin position="262"/>
        <end position="264"/>
    </location>
</feature>
<feature type="helix" evidence="9">
    <location>
        <begin position="268"/>
        <end position="290"/>
    </location>
</feature>
<evidence type="ECO:0000255" key="1">
    <source>
        <dbReference type="PROSITE-ProRule" id="PRU00718"/>
    </source>
</evidence>
<evidence type="ECO:0000269" key="2">
    <source>
    </source>
</evidence>
<evidence type="ECO:0000269" key="3">
    <source>
    </source>
</evidence>
<evidence type="ECO:0000269" key="4">
    <source>
    </source>
</evidence>
<evidence type="ECO:0000303" key="5">
    <source>
    </source>
</evidence>
<evidence type="ECO:0000303" key="6">
    <source>
    </source>
</evidence>
<evidence type="ECO:0000305" key="7"/>
<evidence type="ECO:0000312" key="8">
    <source>
        <dbReference type="EMBL" id="ABC88396.1"/>
    </source>
</evidence>
<evidence type="ECO:0007829" key="9">
    <source>
        <dbReference type="PDB" id="3HRD"/>
    </source>
</evidence>
<proteinExistence type="evidence at protein level"/>
<organism>
    <name type="scientific">Eubacterium barkeri</name>
    <name type="common">Clostridium barkeri</name>
    <dbReference type="NCBI Taxonomy" id="1528"/>
    <lineage>
        <taxon>Bacteria</taxon>
        <taxon>Bacillati</taxon>
        <taxon>Bacillota</taxon>
        <taxon>Clostridia</taxon>
        <taxon>Eubacteriales</taxon>
        <taxon>Eubacteriaceae</taxon>
        <taxon>Eubacterium</taxon>
    </lineage>
</organism>
<sequence>MKDFEFFAPKTLEEAKGLLHQYKDVPPAIIAGGTDLVIEINDRWEKPDVVIDIKKLKELEYIRVEENTIHIGALSTFTQIENHPFIRSHVRALYKAASQVGSPQIRNLGTIGGNLSTSSVAGDGVSAMTTLDATVVLESVRGTRQMKLTDFFDGEGFKRRNALEADEIMTEVIIDRPDAHSASAFYKLAKRKSLAISVIGGGMAVKVDDAGVCTWASMRGGCIGRYPLHFKQAEEMLVGAPLTMETMEATLPILHDTVYDMARARPSVLYKKESVQGVFKKLFVDILDQLEGGCNE</sequence>
<accession>Q0QLF4</accession>
<name>NDFS_EUBBA</name>